<gene>
    <name evidence="1" type="primary">recR</name>
    <name type="ordered locus">BceJ2315_18600</name>
    <name type="ORF">BCAL1897</name>
</gene>
<evidence type="ECO:0000255" key="1">
    <source>
        <dbReference type="HAMAP-Rule" id="MF_00017"/>
    </source>
</evidence>
<protein>
    <recommendedName>
        <fullName evidence="1">Recombination protein RecR</fullName>
    </recommendedName>
</protein>
<comment type="function">
    <text evidence="1">May play a role in DNA repair. It seems to be involved in an RecBC-independent recombinational process of DNA repair. It may act with RecF and RecO.</text>
</comment>
<comment type="similarity">
    <text evidence="1">Belongs to the RecR family.</text>
</comment>
<name>RECR_BURCJ</name>
<reference key="1">
    <citation type="journal article" date="2009" name="J. Bacteriol.">
        <title>The genome of Burkholderia cenocepacia J2315, an epidemic pathogen of cystic fibrosis patients.</title>
        <authorList>
            <person name="Holden M.T."/>
            <person name="Seth-Smith H.M."/>
            <person name="Crossman L.C."/>
            <person name="Sebaihia M."/>
            <person name="Bentley S.D."/>
            <person name="Cerdeno-Tarraga A.M."/>
            <person name="Thomson N.R."/>
            <person name="Bason N."/>
            <person name="Quail M.A."/>
            <person name="Sharp S."/>
            <person name="Cherevach I."/>
            <person name="Churcher C."/>
            <person name="Goodhead I."/>
            <person name="Hauser H."/>
            <person name="Holroyd N."/>
            <person name="Mungall K."/>
            <person name="Scott P."/>
            <person name="Walker D."/>
            <person name="White B."/>
            <person name="Rose H."/>
            <person name="Iversen P."/>
            <person name="Mil-Homens D."/>
            <person name="Rocha E.P."/>
            <person name="Fialho A.M."/>
            <person name="Baldwin A."/>
            <person name="Dowson C."/>
            <person name="Barrell B.G."/>
            <person name="Govan J.R."/>
            <person name="Vandamme P."/>
            <person name="Hart C.A."/>
            <person name="Mahenthiralingam E."/>
            <person name="Parkhill J."/>
        </authorList>
    </citation>
    <scope>NUCLEOTIDE SEQUENCE [LARGE SCALE GENOMIC DNA]</scope>
    <source>
        <strain>ATCC BAA-245 / DSM 16553 / LMG 16656 / NCTC 13227 / J2315 / CF5610</strain>
    </source>
</reference>
<accession>B4EAY2</accession>
<proteinExistence type="inferred from homology"/>
<keyword id="KW-0227">DNA damage</keyword>
<keyword id="KW-0233">DNA recombination</keyword>
<keyword id="KW-0234">DNA repair</keyword>
<keyword id="KW-0479">Metal-binding</keyword>
<keyword id="KW-0862">Zinc</keyword>
<keyword id="KW-0863">Zinc-finger</keyword>
<feature type="chain" id="PRO_1000089709" description="Recombination protein RecR">
    <location>
        <begin position="1"/>
        <end position="198"/>
    </location>
</feature>
<feature type="domain" description="Toprim" evidence="1">
    <location>
        <begin position="80"/>
        <end position="175"/>
    </location>
</feature>
<feature type="zinc finger region" description="C4-type" evidence="1">
    <location>
        <begin position="57"/>
        <end position="72"/>
    </location>
</feature>
<sequence>MKQPSALSALVEALRVLPGVGPKSAQRMAVHLMQHDREGAERLGRSLLFATEHLQHCEKCNTFTEAQICEVCSDEERDPTLLCVVETPADQIMLEQTMTYRGLYFVLMGRLSPLDGIGPKEIHFDRLVRRASDGVVKEVVLATNFTNEGEATAHYLGQTLKARGLAVTRLARGVPVGGELEYVDAGTIARAMLDRRTM</sequence>
<organism>
    <name type="scientific">Burkholderia cenocepacia (strain ATCC BAA-245 / DSM 16553 / LMG 16656 / NCTC 13227 / J2315 / CF5610)</name>
    <name type="common">Burkholderia cepacia (strain J2315)</name>
    <dbReference type="NCBI Taxonomy" id="216591"/>
    <lineage>
        <taxon>Bacteria</taxon>
        <taxon>Pseudomonadati</taxon>
        <taxon>Pseudomonadota</taxon>
        <taxon>Betaproteobacteria</taxon>
        <taxon>Burkholderiales</taxon>
        <taxon>Burkholderiaceae</taxon>
        <taxon>Burkholderia</taxon>
        <taxon>Burkholderia cepacia complex</taxon>
    </lineage>
</organism>
<dbReference type="EMBL" id="AM747720">
    <property type="protein sequence ID" value="CAR52197.1"/>
    <property type="molecule type" value="Genomic_DNA"/>
</dbReference>
<dbReference type="RefSeq" id="WP_006478665.1">
    <property type="nucleotide sequence ID" value="NC_011000.1"/>
</dbReference>
<dbReference type="SMR" id="B4EAY2"/>
<dbReference type="GeneID" id="93191823"/>
<dbReference type="KEGG" id="bcj:BCAL1897"/>
<dbReference type="eggNOG" id="COG0353">
    <property type="taxonomic scope" value="Bacteria"/>
</dbReference>
<dbReference type="HOGENOM" id="CLU_060739_1_2_4"/>
<dbReference type="BioCyc" id="BCEN216591:G1G1V-2089-MONOMER"/>
<dbReference type="Proteomes" id="UP000001035">
    <property type="component" value="Chromosome 1"/>
</dbReference>
<dbReference type="GO" id="GO:0003677">
    <property type="term" value="F:DNA binding"/>
    <property type="evidence" value="ECO:0007669"/>
    <property type="project" value="UniProtKB-UniRule"/>
</dbReference>
<dbReference type="GO" id="GO:0008270">
    <property type="term" value="F:zinc ion binding"/>
    <property type="evidence" value="ECO:0007669"/>
    <property type="project" value="UniProtKB-KW"/>
</dbReference>
<dbReference type="GO" id="GO:0006310">
    <property type="term" value="P:DNA recombination"/>
    <property type="evidence" value="ECO:0007669"/>
    <property type="project" value="UniProtKB-UniRule"/>
</dbReference>
<dbReference type="GO" id="GO:0006281">
    <property type="term" value="P:DNA repair"/>
    <property type="evidence" value="ECO:0007669"/>
    <property type="project" value="UniProtKB-UniRule"/>
</dbReference>
<dbReference type="CDD" id="cd01025">
    <property type="entry name" value="TOPRIM_recR"/>
    <property type="match status" value="1"/>
</dbReference>
<dbReference type="Gene3D" id="3.40.1360.10">
    <property type="match status" value="1"/>
</dbReference>
<dbReference type="Gene3D" id="6.10.250.240">
    <property type="match status" value="1"/>
</dbReference>
<dbReference type="Gene3D" id="1.10.8.420">
    <property type="entry name" value="RecR Domain 1"/>
    <property type="match status" value="1"/>
</dbReference>
<dbReference type="HAMAP" id="MF_00017">
    <property type="entry name" value="RecR"/>
    <property type="match status" value="1"/>
</dbReference>
<dbReference type="InterPro" id="IPR000093">
    <property type="entry name" value="DNA_Rcmb_RecR"/>
</dbReference>
<dbReference type="InterPro" id="IPR023627">
    <property type="entry name" value="Rcmb_RecR"/>
</dbReference>
<dbReference type="InterPro" id="IPR015967">
    <property type="entry name" value="Rcmb_RecR_Znf"/>
</dbReference>
<dbReference type="InterPro" id="IPR006171">
    <property type="entry name" value="TOPRIM_dom"/>
</dbReference>
<dbReference type="InterPro" id="IPR034137">
    <property type="entry name" value="TOPRIM_RecR"/>
</dbReference>
<dbReference type="NCBIfam" id="TIGR00615">
    <property type="entry name" value="recR"/>
    <property type="match status" value="1"/>
</dbReference>
<dbReference type="PANTHER" id="PTHR30446">
    <property type="entry name" value="RECOMBINATION PROTEIN RECR"/>
    <property type="match status" value="1"/>
</dbReference>
<dbReference type="PANTHER" id="PTHR30446:SF0">
    <property type="entry name" value="RECOMBINATION PROTEIN RECR"/>
    <property type="match status" value="1"/>
</dbReference>
<dbReference type="Pfam" id="PF21175">
    <property type="entry name" value="RecR_C"/>
    <property type="match status" value="1"/>
</dbReference>
<dbReference type="Pfam" id="PF21176">
    <property type="entry name" value="RecR_HhH"/>
    <property type="match status" value="1"/>
</dbReference>
<dbReference type="Pfam" id="PF02132">
    <property type="entry name" value="RecR_ZnF"/>
    <property type="match status" value="1"/>
</dbReference>
<dbReference type="Pfam" id="PF13662">
    <property type="entry name" value="Toprim_4"/>
    <property type="match status" value="1"/>
</dbReference>
<dbReference type="SMART" id="SM00493">
    <property type="entry name" value="TOPRIM"/>
    <property type="match status" value="1"/>
</dbReference>
<dbReference type="SUPFAM" id="SSF111304">
    <property type="entry name" value="Recombination protein RecR"/>
    <property type="match status" value="1"/>
</dbReference>
<dbReference type="PROSITE" id="PS01300">
    <property type="entry name" value="RECR"/>
    <property type="match status" value="1"/>
</dbReference>
<dbReference type="PROSITE" id="PS50880">
    <property type="entry name" value="TOPRIM"/>
    <property type="match status" value="1"/>
</dbReference>